<proteinExistence type="inferred from homology"/>
<comment type="function">
    <text evidence="1">Involved in cell division.</text>
</comment>
<comment type="subcellular location">
    <subcellularLocation>
        <location evidence="1">Cell membrane</location>
        <topology evidence="1">Multi-pass membrane protein</topology>
    </subcellularLocation>
</comment>
<comment type="similarity">
    <text evidence="1">Belongs to the CrgA family.</text>
</comment>
<organism>
    <name type="scientific">Mycobacterium bovis (strain BCG / Tokyo 172 / ATCC 35737 / TMC 1019)</name>
    <dbReference type="NCBI Taxonomy" id="561275"/>
    <lineage>
        <taxon>Bacteria</taxon>
        <taxon>Bacillati</taxon>
        <taxon>Actinomycetota</taxon>
        <taxon>Actinomycetes</taxon>
        <taxon>Mycobacteriales</taxon>
        <taxon>Mycobacteriaceae</taxon>
        <taxon>Mycobacterium</taxon>
        <taxon>Mycobacterium tuberculosis complex</taxon>
    </lineage>
</organism>
<evidence type="ECO:0000255" key="1">
    <source>
        <dbReference type="HAMAP-Rule" id="MF_00631"/>
    </source>
</evidence>
<protein>
    <recommendedName>
        <fullName evidence="1">Cell division protein CrgA</fullName>
    </recommendedName>
</protein>
<name>CRGA_MYCBT</name>
<gene>
    <name evidence="1" type="primary">crgA</name>
    <name type="ordered locus">JTY_0011</name>
</gene>
<accession>C1AJ08</accession>
<sequence>MPKSKVRKKNDFTVSAVSRTPMKVKVGPSSVWFVSLFIGLMLIGLIWLMVFQLAAIGSQAPTALNWMAQLGPWNYAIAFAFMITGLLLTMRWH</sequence>
<reference key="1">
    <citation type="journal article" date="2009" name="Vaccine">
        <title>Whole genome sequence analysis of Mycobacterium bovis bacillus Calmette-Guerin (BCG) Tokyo 172: a comparative study of BCG vaccine substrains.</title>
        <authorList>
            <person name="Seki M."/>
            <person name="Honda I."/>
            <person name="Fujita I."/>
            <person name="Yano I."/>
            <person name="Yamamoto S."/>
            <person name="Koyama A."/>
        </authorList>
    </citation>
    <scope>NUCLEOTIDE SEQUENCE [LARGE SCALE GENOMIC DNA]</scope>
    <source>
        <strain>BCG / Tokyo 172 / ATCC 35737 / TMC 1019</strain>
    </source>
</reference>
<feature type="chain" id="PRO_1000147275" description="Cell division protein CrgA">
    <location>
        <begin position="1"/>
        <end position="93"/>
    </location>
</feature>
<feature type="transmembrane region" description="Helical" evidence="1">
    <location>
        <begin position="31"/>
        <end position="51"/>
    </location>
</feature>
<feature type="transmembrane region" description="Helical" evidence="1">
    <location>
        <begin position="70"/>
        <end position="90"/>
    </location>
</feature>
<dbReference type="EMBL" id="AP010918">
    <property type="protein sequence ID" value="BAH24313.1"/>
    <property type="molecule type" value="Genomic_DNA"/>
</dbReference>
<dbReference type="RefSeq" id="WP_003400344.1">
    <property type="nucleotide sequence ID" value="NZ_CP014566.1"/>
</dbReference>
<dbReference type="BMRB" id="C1AJ08"/>
<dbReference type="SMR" id="C1AJ08"/>
<dbReference type="GeneID" id="45423970"/>
<dbReference type="KEGG" id="mbt:JTY_0011"/>
<dbReference type="HOGENOM" id="CLU_149126_2_0_11"/>
<dbReference type="GO" id="GO:0005886">
    <property type="term" value="C:plasma membrane"/>
    <property type="evidence" value="ECO:0007669"/>
    <property type="project" value="UniProtKB-SubCell"/>
</dbReference>
<dbReference type="GO" id="GO:0051301">
    <property type="term" value="P:cell division"/>
    <property type="evidence" value="ECO:0007669"/>
    <property type="project" value="UniProtKB-UniRule"/>
</dbReference>
<dbReference type="HAMAP" id="MF_00631">
    <property type="entry name" value="CrgA"/>
    <property type="match status" value="1"/>
</dbReference>
<dbReference type="InterPro" id="IPR009619">
    <property type="entry name" value="CrgA"/>
</dbReference>
<dbReference type="NCBIfam" id="NF001194">
    <property type="entry name" value="PRK00159.1"/>
    <property type="match status" value="1"/>
</dbReference>
<dbReference type="Pfam" id="PF06781">
    <property type="entry name" value="CrgA"/>
    <property type="match status" value="1"/>
</dbReference>
<keyword id="KW-0131">Cell cycle</keyword>
<keyword id="KW-0132">Cell division</keyword>
<keyword id="KW-1003">Cell membrane</keyword>
<keyword id="KW-0472">Membrane</keyword>
<keyword id="KW-0812">Transmembrane</keyword>
<keyword id="KW-1133">Transmembrane helix</keyword>